<accession>B1II44</accession>
<feature type="chain" id="PRO_0000354188" description="Small ribosomal subunit protein uS15">
    <location>
        <begin position="1"/>
        <end position="87"/>
    </location>
</feature>
<feature type="region of interest" description="Disordered" evidence="2">
    <location>
        <begin position="1"/>
        <end position="23"/>
    </location>
</feature>
<feature type="compositionally biased region" description="Basic and acidic residues" evidence="2">
    <location>
        <begin position="1"/>
        <end position="19"/>
    </location>
</feature>
<organism>
    <name type="scientific">Clostridium botulinum (strain Okra / Type B1)</name>
    <dbReference type="NCBI Taxonomy" id="498213"/>
    <lineage>
        <taxon>Bacteria</taxon>
        <taxon>Bacillati</taxon>
        <taxon>Bacillota</taxon>
        <taxon>Clostridia</taxon>
        <taxon>Eubacteriales</taxon>
        <taxon>Clostridiaceae</taxon>
        <taxon>Clostridium</taxon>
    </lineage>
</organism>
<comment type="function">
    <text evidence="1">One of the primary rRNA binding proteins, it binds directly to 16S rRNA where it helps nucleate assembly of the platform of the 30S subunit by binding and bridging several RNA helices of the 16S rRNA.</text>
</comment>
<comment type="function">
    <text evidence="1">Forms an intersubunit bridge (bridge B4) with the 23S rRNA of the 50S subunit in the ribosome.</text>
</comment>
<comment type="subunit">
    <text evidence="1">Part of the 30S ribosomal subunit. Forms a bridge to the 50S subunit in the 70S ribosome, contacting the 23S rRNA.</text>
</comment>
<comment type="similarity">
    <text evidence="1">Belongs to the universal ribosomal protein uS15 family.</text>
</comment>
<comment type="sequence caution" evidence="3">
    <conflict type="erroneous initiation">
        <sequence resource="EMBL-CDS" id="ACA46134"/>
    </conflict>
</comment>
<keyword id="KW-0687">Ribonucleoprotein</keyword>
<keyword id="KW-0689">Ribosomal protein</keyword>
<keyword id="KW-0694">RNA-binding</keyword>
<keyword id="KW-0699">rRNA-binding</keyword>
<proteinExistence type="inferred from homology"/>
<dbReference type="EMBL" id="CP000939">
    <property type="protein sequence ID" value="ACA46134.1"/>
    <property type="status" value="ALT_INIT"/>
    <property type="molecule type" value="Genomic_DNA"/>
</dbReference>
<dbReference type="RefSeq" id="WP_003388351.1">
    <property type="nucleotide sequence ID" value="NC_010516.1"/>
</dbReference>
<dbReference type="SMR" id="B1II44"/>
<dbReference type="GeneID" id="92939166"/>
<dbReference type="KEGG" id="cbb:CLD_2227"/>
<dbReference type="HOGENOM" id="CLU_148518_0_1_9"/>
<dbReference type="Proteomes" id="UP000008541">
    <property type="component" value="Chromosome"/>
</dbReference>
<dbReference type="GO" id="GO:0022627">
    <property type="term" value="C:cytosolic small ribosomal subunit"/>
    <property type="evidence" value="ECO:0007669"/>
    <property type="project" value="TreeGrafter"/>
</dbReference>
<dbReference type="GO" id="GO:0019843">
    <property type="term" value="F:rRNA binding"/>
    <property type="evidence" value="ECO:0007669"/>
    <property type="project" value="UniProtKB-UniRule"/>
</dbReference>
<dbReference type="GO" id="GO:0003735">
    <property type="term" value="F:structural constituent of ribosome"/>
    <property type="evidence" value="ECO:0007669"/>
    <property type="project" value="InterPro"/>
</dbReference>
<dbReference type="GO" id="GO:0006412">
    <property type="term" value="P:translation"/>
    <property type="evidence" value="ECO:0007669"/>
    <property type="project" value="UniProtKB-UniRule"/>
</dbReference>
<dbReference type="CDD" id="cd00353">
    <property type="entry name" value="Ribosomal_S15p_S13e"/>
    <property type="match status" value="1"/>
</dbReference>
<dbReference type="FunFam" id="1.10.287.10:FF:000002">
    <property type="entry name" value="30S ribosomal protein S15"/>
    <property type="match status" value="1"/>
</dbReference>
<dbReference type="Gene3D" id="6.10.250.3130">
    <property type="match status" value="1"/>
</dbReference>
<dbReference type="Gene3D" id="1.10.287.10">
    <property type="entry name" value="S15/NS1, RNA-binding"/>
    <property type="match status" value="1"/>
</dbReference>
<dbReference type="HAMAP" id="MF_01343_B">
    <property type="entry name" value="Ribosomal_uS15_B"/>
    <property type="match status" value="1"/>
</dbReference>
<dbReference type="InterPro" id="IPR000589">
    <property type="entry name" value="Ribosomal_uS15"/>
</dbReference>
<dbReference type="InterPro" id="IPR005290">
    <property type="entry name" value="Ribosomal_uS15_bac-type"/>
</dbReference>
<dbReference type="InterPro" id="IPR009068">
    <property type="entry name" value="uS15_NS1_RNA-bd_sf"/>
</dbReference>
<dbReference type="NCBIfam" id="TIGR00952">
    <property type="entry name" value="S15_bact"/>
    <property type="match status" value="1"/>
</dbReference>
<dbReference type="PANTHER" id="PTHR23321">
    <property type="entry name" value="RIBOSOMAL PROTEIN S15, BACTERIAL AND ORGANELLAR"/>
    <property type="match status" value="1"/>
</dbReference>
<dbReference type="PANTHER" id="PTHR23321:SF26">
    <property type="entry name" value="SMALL RIBOSOMAL SUBUNIT PROTEIN US15M"/>
    <property type="match status" value="1"/>
</dbReference>
<dbReference type="Pfam" id="PF00312">
    <property type="entry name" value="Ribosomal_S15"/>
    <property type="match status" value="1"/>
</dbReference>
<dbReference type="SMART" id="SM01387">
    <property type="entry name" value="Ribosomal_S15"/>
    <property type="match status" value="1"/>
</dbReference>
<dbReference type="SUPFAM" id="SSF47060">
    <property type="entry name" value="S15/NS1 RNA-binding domain"/>
    <property type="match status" value="1"/>
</dbReference>
<dbReference type="PROSITE" id="PS00362">
    <property type="entry name" value="RIBOSOMAL_S15"/>
    <property type="match status" value="1"/>
</dbReference>
<protein>
    <recommendedName>
        <fullName evidence="1">Small ribosomal subunit protein uS15</fullName>
    </recommendedName>
    <alternativeName>
        <fullName evidence="3">30S ribosomal protein S15</fullName>
    </alternativeName>
</protein>
<evidence type="ECO:0000255" key="1">
    <source>
        <dbReference type="HAMAP-Rule" id="MF_01343"/>
    </source>
</evidence>
<evidence type="ECO:0000256" key="2">
    <source>
        <dbReference type="SAM" id="MobiDB-lite"/>
    </source>
</evidence>
<evidence type="ECO:0000305" key="3"/>
<name>RS15_CLOBK</name>
<gene>
    <name evidence="1" type="primary">rpsO</name>
    <name type="ordered locus">CLD_2227</name>
</gene>
<reference key="1">
    <citation type="journal article" date="2007" name="PLoS ONE">
        <title>Analysis of the neurotoxin complex genes in Clostridium botulinum A1-A4 and B1 strains: BoNT/A3, /Ba4 and /B1 clusters are located within plasmids.</title>
        <authorList>
            <person name="Smith T.J."/>
            <person name="Hill K.K."/>
            <person name="Foley B.T."/>
            <person name="Detter J.C."/>
            <person name="Munk A.C."/>
            <person name="Bruce D.C."/>
            <person name="Doggett N.A."/>
            <person name="Smith L.A."/>
            <person name="Marks J.D."/>
            <person name="Xie G."/>
            <person name="Brettin T.S."/>
        </authorList>
    </citation>
    <scope>NUCLEOTIDE SEQUENCE [LARGE SCALE GENOMIC DNA]</scope>
    <source>
        <strain>Okra / Type B1</strain>
    </source>
</reference>
<sequence length="87" mass="10276">MDKAKKQELMAKHARHEGDTGSPEVQIALLTERINHLNSHLKEHKKDHHSRRGLLMMVGKRRGLLNYLMREDIERYRAIIKELGLRK</sequence>